<comment type="function">
    <text evidence="1">Participates actively in the response to hyperosmotic and heat shock by preventing the aggregation of stress-denatured proteins and by disaggregating proteins, also in an autonomous, DnaK-independent fashion. Unfolded proteins bind initially to DnaJ; upon interaction with the DnaJ-bound protein, DnaK hydrolyzes its bound ATP, resulting in the formation of a stable complex. GrpE releases ADP from DnaK; ATP binding to DnaK triggers the release of the substrate protein, thus completing the reaction cycle. Several rounds of ATP-dependent interactions between DnaJ, DnaK and GrpE are required for fully efficient folding. Also involved, together with DnaK and GrpE, in the DNA replication of plasmids through activation of initiation proteins.</text>
</comment>
<comment type="cofactor">
    <cofactor evidence="1">
        <name>Zn(2+)</name>
        <dbReference type="ChEBI" id="CHEBI:29105"/>
    </cofactor>
    <text evidence="1">Binds 2 Zn(2+) ions per monomer.</text>
</comment>
<comment type="subunit">
    <text evidence="1">Homodimer.</text>
</comment>
<comment type="subcellular location">
    <subcellularLocation>
        <location evidence="1">Cytoplasm</location>
    </subcellularLocation>
</comment>
<comment type="domain">
    <text evidence="1">The J domain is necessary and sufficient to stimulate DnaK ATPase activity. Zinc center 1 plays an important role in the autonomous, DnaK-independent chaperone activity of DnaJ. Zinc center 2 is essential for interaction with DnaK and for DnaJ activity.</text>
</comment>
<comment type="similarity">
    <text evidence="1">Belongs to the DnaJ family.</text>
</comment>
<name>DNAJ1_MYCPA</name>
<reference key="1">
    <citation type="journal article" date="2005" name="Proc. Natl. Acad. Sci. U.S.A.">
        <title>The complete genome sequence of Mycobacterium avium subspecies paratuberculosis.</title>
        <authorList>
            <person name="Li L."/>
            <person name="Bannantine J.P."/>
            <person name="Zhang Q."/>
            <person name="Amonsin A."/>
            <person name="May B.J."/>
            <person name="Alt D."/>
            <person name="Banerji N."/>
            <person name="Kanjilal S."/>
            <person name="Kapur V."/>
        </authorList>
    </citation>
    <scope>NUCLEOTIDE SEQUENCE [LARGE SCALE GENOMIC DNA]</scope>
    <source>
        <strain>ATCC BAA-968 / K-10</strain>
    </source>
</reference>
<dbReference type="EMBL" id="AE016958">
    <property type="protein sequence ID" value="AAS04479.1"/>
    <property type="molecule type" value="Genomic_DNA"/>
</dbReference>
<dbReference type="SMR" id="Q73XZ6"/>
<dbReference type="STRING" id="262316.MAP_2162c"/>
<dbReference type="KEGG" id="mpa:MAP_2162c"/>
<dbReference type="eggNOG" id="COG0484">
    <property type="taxonomic scope" value="Bacteria"/>
</dbReference>
<dbReference type="HOGENOM" id="CLU_017633_0_7_11"/>
<dbReference type="Proteomes" id="UP000000580">
    <property type="component" value="Chromosome"/>
</dbReference>
<dbReference type="GO" id="GO:0005737">
    <property type="term" value="C:cytoplasm"/>
    <property type="evidence" value="ECO:0007669"/>
    <property type="project" value="UniProtKB-SubCell"/>
</dbReference>
<dbReference type="GO" id="GO:0005524">
    <property type="term" value="F:ATP binding"/>
    <property type="evidence" value="ECO:0007669"/>
    <property type="project" value="InterPro"/>
</dbReference>
<dbReference type="GO" id="GO:0031072">
    <property type="term" value="F:heat shock protein binding"/>
    <property type="evidence" value="ECO:0007669"/>
    <property type="project" value="InterPro"/>
</dbReference>
<dbReference type="GO" id="GO:0051082">
    <property type="term" value="F:unfolded protein binding"/>
    <property type="evidence" value="ECO:0007669"/>
    <property type="project" value="UniProtKB-UniRule"/>
</dbReference>
<dbReference type="GO" id="GO:0008270">
    <property type="term" value="F:zinc ion binding"/>
    <property type="evidence" value="ECO:0007669"/>
    <property type="project" value="UniProtKB-UniRule"/>
</dbReference>
<dbReference type="GO" id="GO:0051085">
    <property type="term" value="P:chaperone cofactor-dependent protein refolding"/>
    <property type="evidence" value="ECO:0007669"/>
    <property type="project" value="TreeGrafter"/>
</dbReference>
<dbReference type="GO" id="GO:0006260">
    <property type="term" value="P:DNA replication"/>
    <property type="evidence" value="ECO:0007669"/>
    <property type="project" value="UniProtKB-KW"/>
</dbReference>
<dbReference type="GO" id="GO:0042026">
    <property type="term" value="P:protein refolding"/>
    <property type="evidence" value="ECO:0007669"/>
    <property type="project" value="TreeGrafter"/>
</dbReference>
<dbReference type="GO" id="GO:0009408">
    <property type="term" value="P:response to heat"/>
    <property type="evidence" value="ECO:0007669"/>
    <property type="project" value="InterPro"/>
</dbReference>
<dbReference type="CDD" id="cd06257">
    <property type="entry name" value="DnaJ"/>
    <property type="match status" value="1"/>
</dbReference>
<dbReference type="CDD" id="cd10747">
    <property type="entry name" value="DnaJ_C"/>
    <property type="match status" value="1"/>
</dbReference>
<dbReference type="CDD" id="cd10719">
    <property type="entry name" value="DnaJ_zf"/>
    <property type="match status" value="1"/>
</dbReference>
<dbReference type="FunFam" id="2.60.260.20:FF:000005">
    <property type="entry name" value="Chaperone protein dnaJ 1, mitochondrial"/>
    <property type="match status" value="1"/>
</dbReference>
<dbReference type="FunFam" id="2.10.230.10:FF:000002">
    <property type="entry name" value="Molecular chaperone DnaJ"/>
    <property type="match status" value="1"/>
</dbReference>
<dbReference type="Gene3D" id="1.10.287.110">
    <property type="entry name" value="DnaJ domain"/>
    <property type="match status" value="1"/>
</dbReference>
<dbReference type="Gene3D" id="2.10.230.10">
    <property type="entry name" value="Heat shock protein DnaJ, cysteine-rich domain"/>
    <property type="match status" value="1"/>
</dbReference>
<dbReference type="Gene3D" id="2.60.260.20">
    <property type="entry name" value="Urease metallochaperone UreE, N-terminal domain"/>
    <property type="match status" value="2"/>
</dbReference>
<dbReference type="HAMAP" id="MF_01152">
    <property type="entry name" value="DnaJ"/>
    <property type="match status" value="1"/>
</dbReference>
<dbReference type="InterPro" id="IPR012724">
    <property type="entry name" value="DnaJ"/>
</dbReference>
<dbReference type="InterPro" id="IPR002939">
    <property type="entry name" value="DnaJ_C"/>
</dbReference>
<dbReference type="InterPro" id="IPR001623">
    <property type="entry name" value="DnaJ_domain"/>
</dbReference>
<dbReference type="InterPro" id="IPR008971">
    <property type="entry name" value="HSP40/DnaJ_pept-bd"/>
</dbReference>
<dbReference type="InterPro" id="IPR001305">
    <property type="entry name" value="HSP_DnaJ_Cys-rich_dom"/>
</dbReference>
<dbReference type="InterPro" id="IPR036410">
    <property type="entry name" value="HSP_DnaJ_Cys-rich_dom_sf"/>
</dbReference>
<dbReference type="InterPro" id="IPR036869">
    <property type="entry name" value="J_dom_sf"/>
</dbReference>
<dbReference type="NCBIfam" id="NF008035">
    <property type="entry name" value="PRK10767.1"/>
    <property type="match status" value="1"/>
</dbReference>
<dbReference type="NCBIfam" id="NF010871">
    <property type="entry name" value="PRK14278.1"/>
    <property type="match status" value="1"/>
</dbReference>
<dbReference type="PANTHER" id="PTHR43096:SF48">
    <property type="entry name" value="CHAPERONE PROTEIN DNAJ"/>
    <property type="match status" value="1"/>
</dbReference>
<dbReference type="PANTHER" id="PTHR43096">
    <property type="entry name" value="DNAJ HOMOLOG 1, MITOCHONDRIAL-RELATED"/>
    <property type="match status" value="1"/>
</dbReference>
<dbReference type="Pfam" id="PF00226">
    <property type="entry name" value="DnaJ"/>
    <property type="match status" value="1"/>
</dbReference>
<dbReference type="Pfam" id="PF01556">
    <property type="entry name" value="DnaJ_C"/>
    <property type="match status" value="1"/>
</dbReference>
<dbReference type="Pfam" id="PF00684">
    <property type="entry name" value="DnaJ_CXXCXGXG"/>
    <property type="match status" value="1"/>
</dbReference>
<dbReference type="PRINTS" id="PR00625">
    <property type="entry name" value="JDOMAIN"/>
</dbReference>
<dbReference type="SMART" id="SM00271">
    <property type="entry name" value="DnaJ"/>
    <property type="match status" value="1"/>
</dbReference>
<dbReference type="SUPFAM" id="SSF46565">
    <property type="entry name" value="Chaperone J-domain"/>
    <property type="match status" value="1"/>
</dbReference>
<dbReference type="SUPFAM" id="SSF57938">
    <property type="entry name" value="DnaJ/Hsp40 cysteine-rich domain"/>
    <property type="match status" value="1"/>
</dbReference>
<dbReference type="SUPFAM" id="SSF49493">
    <property type="entry name" value="HSP40/DnaJ peptide-binding domain"/>
    <property type="match status" value="2"/>
</dbReference>
<dbReference type="PROSITE" id="PS50076">
    <property type="entry name" value="DNAJ_2"/>
    <property type="match status" value="1"/>
</dbReference>
<dbReference type="PROSITE" id="PS51188">
    <property type="entry name" value="ZF_CR"/>
    <property type="match status" value="1"/>
</dbReference>
<gene>
    <name evidence="1" type="primary">dnaJ1</name>
    <name type="ordered locus">MAP_2162c</name>
</gene>
<accession>Q73XZ6</accession>
<protein>
    <recommendedName>
        <fullName evidence="1">Chaperone protein DnaJ 1</fullName>
    </recommendedName>
</protein>
<organism>
    <name type="scientific">Mycolicibacterium paratuberculosis (strain ATCC BAA-968 / K-10)</name>
    <name type="common">Mycobacterium paratuberculosis</name>
    <dbReference type="NCBI Taxonomy" id="262316"/>
    <lineage>
        <taxon>Bacteria</taxon>
        <taxon>Bacillati</taxon>
        <taxon>Actinomycetota</taxon>
        <taxon>Actinomycetes</taxon>
        <taxon>Mycobacteriales</taxon>
        <taxon>Mycobacteriaceae</taxon>
        <taxon>Mycobacterium</taxon>
        <taxon>Mycobacterium avium complex (MAC)</taxon>
    </lineage>
</organism>
<keyword id="KW-0143">Chaperone</keyword>
<keyword id="KW-0963">Cytoplasm</keyword>
<keyword id="KW-0235">DNA replication</keyword>
<keyword id="KW-0479">Metal-binding</keyword>
<keyword id="KW-1185">Reference proteome</keyword>
<keyword id="KW-0677">Repeat</keyword>
<keyword id="KW-0346">Stress response</keyword>
<keyword id="KW-0862">Zinc</keyword>
<keyword id="KW-0863">Zinc-finger</keyword>
<sequence>MARDYYGLLGVSRGASDAEIKRAYRKLARELHPDVNPDEAAQAKFKEISVAYEVLSDPEKRRIVDLGGDPLEGAAAAGGGFGGFGGLGDVFEAFFGGGFGGGTTSRGPIGRVRPGSDSLLRMRLDLEECATGVTKQVTVDTAVLCDRCHGKGTNGDSAPVPCDTCGGRGEVQTVQRSLLGQVMTSRPCPTCRGVGVVIPDPCHQCMGDGRVRARREISVKIPAGVGDGMRVRLAAQGEVGPGGGPAGDLYVEVHEQPHDVFVREGDDLHCTVSVPMVDAALGATVTVDAILDGVSEITIPPGTQPGSVITLRGHGMPHLRSGTRGDLHVHVEVVVPSRLDARDTELLREFKGRRGRDVPEVRSTHAGGGLFSRLRETFTGR</sequence>
<feature type="chain" id="PRO_0000070830" description="Chaperone protein DnaJ 1">
    <location>
        <begin position="1"/>
        <end position="381"/>
    </location>
</feature>
<feature type="domain" description="J" evidence="1">
    <location>
        <begin position="4"/>
        <end position="68"/>
    </location>
</feature>
<feature type="repeat" description="CXXCXGXG motif">
    <location>
        <begin position="145"/>
        <end position="152"/>
    </location>
</feature>
<feature type="repeat" description="CXXCXGXG motif">
    <location>
        <begin position="162"/>
        <end position="169"/>
    </location>
</feature>
<feature type="repeat" description="CXXCXGXG motif">
    <location>
        <begin position="188"/>
        <end position="195"/>
    </location>
</feature>
<feature type="repeat" description="CXXCXGXG motif">
    <location>
        <begin position="202"/>
        <end position="209"/>
    </location>
</feature>
<feature type="zinc finger region" description="CR-type" evidence="1">
    <location>
        <begin position="132"/>
        <end position="214"/>
    </location>
</feature>
<feature type="binding site" evidence="1">
    <location>
        <position position="145"/>
    </location>
    <ligand>
        <name>Zn(2+)</name>
        <dbReference type="ChEBI" id="CHEBI:29105"/>
        <label>1</label>
    </ligand>
</feature>
<feature type="binding site" evidence="1">
    <location>
        <position position="148"/>
    </location>
    <ligand>
        <name>Zn(2+)</name>
        <dbReference type="ChEBI" id="CHEBI:29105"/>
        <label>1</label>
    </ligand>
</feature>
<feature type="binding site" evidence="1">
    <location>
        <position position="162"/>
    </location>
    <ligand>
        <name>Zn(2+)</name>
        <dbReference type="ChEBI" id="CHEBI:29105"/>
        <label>2</label>
    </ligand>
</feature>
<feature type="binding site" evidence="1">
    <location>
        <position position="165"/>
    </location>
    <ligand>
        <name>Zn(2+)</name>
        <dbReference type="ChEBI" id="CHEBI:29105"/>
        <label>2</label>
    </ligand>
</feature>
<feature type="binding site" evidence="1">
    <location>
        <position position="188"/>
    </location>
    <ligand>
        <name>Zn(2+)</name>
        <dbReference type="ChEBI" id="CHEBI:29105"/>
        <label>2</label>
    </ligand>
</feature>
<feature type="binding site" evidence="1">
    <location>
        <position position="191"/>
    </location>
    <ligand>
        <name>Zn(2+)</name>
        <dbReference type="ChEBI" id="CHEBI:29105"/>
        <label>2</label>
    </ligand>
</feature>
<feature type="binding site" evidence="1">
    <location>
        <position position="202"/>
    </location>
    <ligand>
        <name>Zn(2+)</name>
        <dbReference type="ChEBI" id="CHEBI:29105"/>
        <label>1</label>
    </ligand>
</feature>
<feature type="binding site" evidence="1">
    <location>
        <position position="205"/>
    </location>
    <ligand>
        <name>Zn(2+)</name>
        <dbReference type="ChEBI" id="CHEBI:29105"/>
        <label>1</label>
    </ligand>
</feature>
<evidence type="ECO:0000255" key="1">
    <source>
        <dbReference type="HAMAP-Rule" id="MF_01152"/>
    </source>
</evidence>
<proteinExistence type="inferred from homology"/>